<gene>
    <name evidence="1" type="primary">ctaA</name>
    <name type="ordered locus">Avi_1670</name>
</gene>
<proteinExistence type="inferred from homology"/>
<protein>
    <recommendedName>
        <fullName evidence="1">Heme A synthase</fullName>
        <shortName evidence="1">HAS</shortName>
        <ecNumber evidence="1">1.17.99.9</ecNumber>
    </recommendedName>
    <alternativeName>
        <fullName evidence="1">Cytochrome aa3-controlling protein</fullName>
    </alternativeName>
</protein>
<name>CTAA_ALLAM</name>
<evidence type="ECO:0000255" key="1">
    <source>
        <dbReference type="HAMAP-Rule" id="MF_01665"/>
    </source>
</evidence>
<reference key="1">
    <citation type="journal article" date="2009" name="J. Bacteriol.">
        <title>Genome sequences of three Agrobacterium biovars help elucidate the evolution of multichromosome genomes in bacteria.</title>
        <authorList>
            <person name="Slater S.C."/>
            <person name="Goldman B.S."/>
            <person name="Goodner B."/>
            <person name="Setubal J.C."/>
            <person name="Farrand S.K."/>
            <person name="Nester E.W."/>
            <person name="Burr T.J."/>
            <person name="Banta L."/>
            <person name="Dickerman A.W."/>
            <person name="Paulsen I."/>
            <person name="Otten L."/>
            <person name="Suen G."/>
            <person name="Welch R."/>
            <person name="Almeida N.F."/>
            <person name="Arnold F."/>
            <person name="Burton O.T."/>
            <person name="Du Z."/>
            <person name="Ewing A."/>
            <person name="Godsy E."/>
            <person name="Heisel S."/>
            <person name="Houmiel K.L."/>
            <person name="Jhaveri J."/>
            <person name="Lu J."/>
            <person name="Miller N.M."/>
            <person name="Norton S."/>
            <person name="Chen Q."/>
            <person name="Phoolcharoen W."/>
            <person name="Ohlin V."/>
            <person name="Ondrusek D."/>
            <person name="Pride N."/>
            <person name="Stricklin S.L."/>
            <person name="Sun J."/>
            <person name="Wheeler C."/>
            <person name="Wilson L."/>
            <person name="Zhu H."/>
            <person name="Wood D.W."/>
        </authorList>
    </citation>
    <scope>NUCLEOTIDE SEQUENCE [LARGE SCALE GENOMIC DNA]</scope>
    <source>
        <strain>ATCC BAA-846 / DSM 112012 / S4</strain>
    </source>
</reference>
<keyword id="KW-1003">Cell membrane</keyword>
<keyword id="KW-0350">Heme biosynthesis</keyword>
<keyword id="KW-0408">Iron</keyword>
<keyword id="KW-0472">Membrane</keyword>
<keyword id="KW-0479">Metal-binding</keyword>
<keyword id="KW-0560">Oxidoreductase</keyword>
<keyword id="KW-1185">Reference proteome</keyword>
<keyword id="KW-0812">Transmembrane</keyword>
<keyword id="KW-1133">Transmembrane helix</keyword>
<sequence length="364" mass="40098">MTIASTASPVPAAAGLDRQSRNRRALRLWLGLVILALFALVLVGGATRLTNSGLSITQWKPIHGVIPPLNAAEWEEEFKLYQQIPQYELVNKGMTVEAFKTIFWWEWAHRFLARSIGVIFALPLVFFWATGRIEKRLRWPLVGILALGGFQGFIGWWMVSSGLSERTEVSQYRLATHLVTACLIFSACVWVMRGLARHSADPAPTAHSRHWAIALLCLVLFQIYLGALVAGLDAGMSYNTWPLMDGALIPGDLLVQQPVWLNFFENPKTVQFVHRIGAYTVLLVALYHMVSSLRAAPGTTHARRSVVLFAIVCCQAVLGISALLLQVPLDAALAHQGGALILLGFTVAHLRGFYGAYPLPKPVA</sequence>
<comment type="function">
    <text evidence="1">Catalyzes the conversion of heme O to heme A by two successive hydroxylations of the methyl group at C8. The first hydroxylation forms heme I, the second hydroxylation results in an unstable dihydroxymethyl group, which spontaneously dehydrates, resulting in the formyl group of heme A.</text>
</comment>
<comment type="catalytic activity">
    <reaction evidence="1">
        <text>Fe(II)-heme o + 2 A + H2O = Fe(II)-heme a + 2 AH2</text>
        <dbReference type="Rhea" id="RHEA:63388"/>
        <dbReference type="ChEBI" id="CHEBI:13193"/>
        <dbReference type="ChEBI" id="CHEBI:15377"/>
        <dbReference type="ChEBI" id="CHEBI:17499"/>
        <dbReference type="ChEBI" id="CHEBI:60530"/>
        <dbReference type="ChEBI" id="CHEBI:61715"/>
        <dbReference type="EC" id="1.17.99.9"/>
    </reaction>
    <physiologicalReaction direction="left-to-right" evidence="1">
        <dbReference type="Rhea" id="RHEA:63389"/>
    </physiologicalReaction>
</comment>
<comment type="cofactor">
    <cofactor evidence="1">
        <name>heme b</name>
        <dbReference type="ChEBI" id="CHEBI:60344"/>
    </cofactor>
</comment>
<comment type="pathway">
    <text evidence="1">Porphyrin-containing compound metabolism; heme A biosynthesis; heme A from heme O: step 1/1.</text>
</comment>
<comment type="subunit">
    <text evidence="1">Interacts with CtaB.</text>
</comment>
<comment type="subcellular location">
    <subcellularLocation>
        <location evidence="1">Cell membrane</location>
        <topology evidence="1">Multi-pass membrane protein</topology>
    </subcellularLocation>
</comment>
<comment type="similarity">
    <text evidence="1">Belongs to the COX15/CtaA family. Type 2 subfamily.</text>
</comment>
<feature type="chain" id="PRO_1000187246" description="Heme A synthase">
    <location>
        <begin position="1"/>
        <end position="364"/>
    </location>
</feature>
<feature type="transmembrane region" description="Helical" evidence="1">
    <location>
        <begin position="25"/>
        <end position="45"/>
    </location>
</feature>
<feature type="transmembrane region" description="Helical" evidence="1">
    <location>
        <begin position="111"/>
        <end position="131"/>
    </location>
</feature>
<feature type="transmembrane region" description="Helical" evidence="1">
    <location>
        <begin position="139"/>
        <end position="159"/>
    </location>
</feature>
<feature type="transmembrane region" description="Helical" evidence="1">
    <location>
        <begin position="174"/>
        <end position="194"/>
    </location>
</feature>
<feature type="transmembrane region" description="Helical" evidence="1">
    <location>
        <begin position="212"/>
        <end position="232"/>
    </location>
</feature>
<feature type="transmembrane region" description="Helical" evidence="1">
    <location>
        <begin position="270"/>
        <end position="290"/>
    </location>
</feature>
<feature type="transmembrane region" description="Helical" evidence="1">
    <location>
        <begin position="305"/>
        <end position="325"/>
    </location>
</feature>
<feature type="transmembrane region" description="Helical" evidence="1">
    <location>
        <begin position="327"/>
        <end position="347"/>
    </location>
</feature>
<feature type="binding site" description="axial binding residue" evidence="1">
    <location>
        <position position="274"/>
    </location>
    <ligand>
        <name>heme</name>
        <dbReference type="ChEBI" id="CHEBI:30413"/>
    </ligand>
    <ligandPart>
        <name>Fe</name>
        <dbReference type="ChEBI" id="CHEBI:18248"/>
    </ligandPart>
</feature>
<feature type="binding site" description="axial binding residue" evidence="1">
    <location>
        <position position="335"/>
    </location>
    <ligand>
        <name>heme</name>
        <dbReference type="ChEBI" id="CHEBI:30413"/>
    </ligand>
    <ligandPart>
        <name>Fe</name>
        <dbReference type="ChEBI" id="CHEBI:18248"/>
    </ligandPart>
</feature>
<organism>
    <name type="scientific">Allorhizobium ampelinum (strain ATCC BAA-846 / DSM 112012 / S4)</name>
    <name type="common">Agrobacterium vitis (strain S4)</name>
    <dbReference type="NCBI Taxonomy" id="311402"/>
    <lineage>
        <taxon>Bacteria</taxon>
        <taxon>Pseudomonadati</taxon>
        <taxon>Pseudomonadota</taxon>
        <taxon>Alphaproteobacteria</taxon>
        <taxon>Hyphomicrobiales</taxon>
        <taxon>Rhizobiaceae</taxon>
        <taxon>Rhizobium/Agrobacterium group</taxon>
        <taxon>Allorhizobium</taxon>
        <taxon>Allorhizobium ampelinum</taxon>
    </lineage>
</organism>
<dbReference type="EC" id="1.17.99.9" evidence="1"/>
<dbReference type="EMBL" id="CP000633">
    <property type="protein sequence ID" value="ACM36196.1"/>
    <property type="molecule type" value="Genomic_DNA"/>
</dbReference>
<dbReference type="RefSeq" id="WP_015915619.1">
    <property type="nucleotide sequence ID" value="NC_011989.1"/>
</dbReference>
<dbReference type="SMR" id="B9JVB6"/>
<dbReference type="STRING" id="311402.Avi_1670"/>
<dbReference type="KEGG" id="avi:Avi_1670"/>
<dbReference type="eggNOG" id="COG1612">
    <property type="taxonomic scope" value="Bacteria"/>
</dbReference>
<dbReference type="HOGENOM" id="CLU_017627_0_0_5"/>
<dbReference type="UniPathway" id="UPA00269">
    <property type="reaction ID" value="UER00713"/>
</dbReference>
<dbReference type="Proteomes" id="UP000001596">
    <property type="component" value="Chromosome 1"/>
</dbReference>
<dbReference type="GO" id="GO:0005886">
    <property type="term" value="C:plasma membrane"/>
    <property type="evidence" value="ECO:0007669"/>
    <property type="project" value="UniProtKB-SubCell"/>
</dbReference>
<dbReference type="GO" id="GO:0046872">
    <property type="term" value="F:metal ion binding"/>
    <property type="evidence" value="ECO:0007669"/>
    <property type="project" value="UniProtKB-KW"/>
</dbReference>
<dbReference type="GO" id="GO:0016653">
    <property type="term" value="F:oxidoreductase activity, acting on NAD(P)H, heme protein as acceptor"/>
    <property type="evidence" value="ECO:0007669"/>
    <property type="project" value="InterPro"/>
</dbReference>
<dbReference type="GO" id="GO:0006784">
    <property type="term" value="P:heme A biosynthetic process"/>
    <property type="evidence" value="ECO:0007669"/>
    <property type="project" value="UniProtKB-UniRule"/>
</dbReference>
<dbReference type="HAMAP" id="MF_01665">
    <property type="entry name" value="HemeA_synth_type2"/>
    <property type="match status" value="1"/>
</dbReference>
<dbReference type="InterPro" id="IPR003780">
    <property type="entry name" value="COX15/CtaA_fam"/>
</dbReference>
<dbReference type="InterPro" id="IPR023754">
    <property type="entry name" value="HemeA_Synthase_type2"/>
</dbReference>
<dbReference type="PANTHER" id="PTHR23289">
    <property type="entry name" value="CYTOCHROME C OXIDASE ASSEMBLY PROTEIN COX15"/>
    <property type="match status" value="1"/>
</dbReference>
<dbReference type="PANTHER" id="PTHR23289:SF2">
    <property type="entry name" value="CYTOCHROME C OXIDASE ASSEMBLY PROTEIN COX15 HOMOLOG"/>
    <property type="match status" value="1"/>
</dbReference>
<dbReference type="Pfam" id="PF02628">
    <property type="entry name" value="COX15-CtaA"/>
    <property type="match status" value="1"/>
</dbReference>
<accession>B9JVB6</accession>